<sequence>MSGSTQPVAQTWRAAEPRYPPHGISYPVQIARSHTDVGLLEYQHHPRDYTSHLSPGSIIQPQRRRPSLLSEFQPGSERSQELHLRPESRTFLPELGKPDIEFTESKRPRLELLPDTLLRPSPLLATGQPSGSEDLTKDRSLAGKLEPVSPPSPPHADPELELAPSRLSKEELIQNMDRVDREITMVEQQISKLKKKQQQLEEEAAKPPEPEKPVSPPPIESKHRSLVQIIYDENRKKAEAAHRILEGLGPQVELPLYNQPSDTRQYHENIKINQAMRKKLILYFKRRNHARKQWEQRFCQRYDQLMEAWEKKVERIENNPRRRAKESKVREYYEKQFPEIRKQRELQERMQSRVGQRGSGLSMSAARSEHEVSEIIDGLSEQENLEKQMRQLAVIPPMLYDADQQRIKFINMNGLMDDPMKVYKDRQVTNMWSEQERDTFREKFMQHPKNFGLIASFLERKTVAECVLYYYLTKKNENYKSLVRRSYRRRGKSQQQQQQQQQQQQQQMARSSQEEKEEKEKEKEADKEEEKQDAENEKEELSKEKTDDTSGEDNDEKEAVASKGRKTANSQGRRKGRITRSMANEANHEETATPQQSSELASMEMNESSRWTEEEMETAKKGLLEHGRNWSAIARMVGSKTVSQCKNFYFNYKKRQNLDEILQQHKLKMEKERNARRKKKKTPAAASEETAFPPAAEDEEMEASGASANEEELAEEAEASQASGNEVPRVGECSGPAAVNNSSDTESVPSPRSEATKDTGPKPTGTEALPAATQPPVPPPEEPAVAPAEPSPVPDASGPPSPEPSPSPAAPPATVDKDEQEAPAAPAPQTEDAKEQKSEAEEIDVGKPEEPEASEEPPESVKSDHKEETEEEPEDKAKGTEAIETVSEAPLKVEEAGSKAAVTKGSSSGATQDSDSSATCSADEVDEPEGGDKGRLLSPRPSLLTPAGDPRASTSPQKPLDLKQLKQRAAAIPPIVTKVHEPPREDTVPPKPVPPVPPPTQHLQPEGDVSQQSGGSPRGKSRSPVPPAEKEAEKPAFFPAFPTEGPKLPTEPPRWSSGLPFPIPPREVIKTSPHAADPSAFSYTPPGHPLPLGLHDSARPVLPRPPISNPPPLISSAKHPGVLERQLGAISQQGMSVQLRVPHSEHAKAPMGPLTMGLPLAVDPKKLGTALGSATSGSITKGLPSTRAADGPSYRGSITHGTPADVLYKGTISRIVGEDSPSRLDRAREDTLPKGHVIYEGKKGHVLSYEGGMSVSQCSKEDGRSSSGPPHETAAPKRTYDMMEGRVGRTVTSASIEGLMGRAIPEQHSPHLKEQHHIRGSITQGIPRSYVEAQEDYLRREAKLLKREGTPPPPPPPRDLTETYKPRPLDPLGPLKLKPTHEGVVATVKEAGRSIHEIPREELRRTPELPLAPRPLKEGSITQGTPLKYDSGAPSTGTKKHDVRSIIGSPGRPFPALHPLDIMADARALERACYEESLKSRSGTSSGAGGSITRGAPVVVPELGKPRQSPLTYEDHGAPFTSHLPRGSPVTTREPTPRLQEGSLLSSKASQDRKLTSTPREIAKSPHSTVPEHHPHPISPYEHLLRGVTGVDLYRGHIPLAFDPTSIPRGIPLEAAAAAYYLPRHLAPSPTYPHLYPPYLIRGYPDTAALENRQTIINDYITSQQMHHNAASAMAQRADMLRGLSPRESSLALNYAAGPRGIIDLSQVPHLPVLVPPTPGTPATAIDRLAYLPTAPPPFSSRHSSSPLSPGGPTHLAKPTATSSSERERERERERDKSILTSTTTVEHAPIWRPGTEQSSGAGGSSRPASHTHQHSPISPRTQDALQQRPSVLHNTSMKGVVTSVEPGTPTVLRWARSTSTSSPVRPAATFPPATHCPLGGTLEGVYPTLMEPVLLPKETSRVARPERPRVDAGHAFLTKPPAREPASSPSKSSEPRSLAPPSSSHTAIARTPAKNLAPHHASPDPPAPTSASDLHREKTQSKPFSIQELELRSLGYHSGAGYSPDGVEPISPVSSPSLTHDKGLSKPLEELEKSHLEGELRHKQPGPMKLSAEAAHLPHLRPLPESQPSSSPLLQTAPGIKGHQRVVTLAQHISEVITQDYTRHHPQQLSGPLPAPLYSFPGASCPVLDLRRPPSDLYLPPPDHGTPARGSPHSEGGKRSPEPSKTSVLGSSEDAIEPVSPPEGMTEPGHARSTAYPLLYRDGEQGEPRMGSKSPGNTSQPPAFFSKLTESNSAMVKSKKQEINKKLNTHNRNEPEYNIGQPGTEIFNMPAITGAGLMTCRSQAVQEHASTNMGLEAIIRKALMGKYDQWEEPPPLGANAFNPLNASASLPAAAMPITTADGRSDHALTSPGGGGKAKVSGRPSSRKAKSPAPGLASGDRPPSVSSVHSEGDCNRRTPLTNRVWEDRPSSAGSTPFPYNPLIMRLQAGVMASPPPPGLAAGSGPLAGPHHAWDEEPKPLLCSQYETLSDSE</sequence>
<proteinExistence type="evidence at protein level"/>
<keyword id="KW-0007">Acetylation</keyword>
<keyword id="KW-0025">Alternative splicing</keyword>
<keyword id="KW-0175">Coiled coil</keyword>
<keyword id="KW-0238">DNA-binding</keyword>
<keyword id="KW-0488">Methylation</keyword>
<keyword id="KW-0539">Nucleus</keyword>
<keyword id="KW-0597">Phosphoprotein</keyword>
<keyword id="KW-1185">Reference proteome</keyword>
<keyword id="KW-0677">Repeat</keyword>
<keyword id="KW-0678">Repressor</keyword>
<keyword id="KW-0804">Transcription</keyword>
<keyword id="KW-0805">Transcription regulation</keyword>
<name>NCOR2_MOUSE</name>
<evidence type="ECO:0000250" key="1">
    <source>
        <dbReference type="UniProtKB" id="Q60974"/>
    </source>
</evidence>
<evidence type="ECO:0000250" key="2">
    <source>
        <dbReference type="UniProtKB" id="Q9Y618"/>
    </source>
</evidence>
<evidence type="ECO:0000255" key="3"/>
<evidence type="ECO:0000255" key="4">
    <source>
        <dbReference type="PROSITE-ProRule" id="PRU00624"/>
    </source>
</evidence>
<evidence type="ECO:0000256" key="5">
    <source>
        <dbReference type="SAM" id="MobiDB-lite"/>
    </source>
</evidence>
<evidence type="ECO:0000269" key="6">
    <source>
    </source>
</evidence>
<evidence type="ECO:0000269" key="7">
    <source>
    </source>
</evidence>
<evidence type="ECO:0000269" key="8">
    <source>
    </source>
</evidence>
<evidence type="ECO:0000269" key="9">
    <source>
    </source>
</evidence>
<evidence type="ECO:0000269" key="10">
    <source>
    </source>
</evidence>
<evidence type="ECO:0000269" key="11">
    <source>
    </source>
</evidence>
<evidence type="ECO:0000269" key="12">
    <source>
    </source>
</evidence>
<evidence type="ECO:0000269" key="13">
    <source>
    </source>
</evidence>
<evidence type="ECO:0000303" key="14">
    <source>
    </source>
</evidence>
<evidence type="ECO:0000303" key="15">
    <source>
    </source>
</evidence>
<evidence type="ECO:0000305" key="16"/>
<evidence type="ECO:0007744" key="17">
    <source>
    </source>
</evidence>
<evidence type="ECO:0007744" key="18">
    <source>
    </source>
</evidence>
<evidence type="ECO:0007744" key="19">
    <source>
    </source>
</evidence>
<evidence type="ECO:0007744" key="20">
    <source>
    </source>
</evidence>
<evidence type="ECO:0007744" key="21">
    <source>
    </source>
</evidence>
<comment type="function">
    <text evidence="2 9">Transcriptional corepressor that mediates the transcriptional repression activity of some nuclear receptors by promoting chromatin condensation, thus preventing access of the basal transcription (PubMed:19144721). Acts by recruiting chromatin modifiers, such as histone deacetylases HDAC1, HDAC2 and HDAC3 (By similarity). Required to activate the histone deacetylase activity of HDAC3 (By similarity). Involved in the regulation BCL6-dependent of the germinal center (GC) reactions, mainly through the control of the GC B-cells proliferation and survival (By similarity). Recruited by ZBTB7A to the androgen response elements/ARE on target genes, negatively regulates androgen receptor signaling and androgen-induced cell proliferation (By similarity).</text>
</comment>
<comment type="subunit">
    <text evidence="2 7 8 9 10 11 12 13">Forms a large corepressor complex that contains SIN3A/B and histone deacetylases HDAC1 and HDAC2. This complex associates with the thyroid (TR) and the retinoid acid receptors (RAR) in the absence of ligand, and may stabilize their interaction with TFIIB. Interacts directly with RARA in the absence of ligand; the interaction represses RARA activity. Interacts (isoform SMRT) with HDAC10. Interacts with MINT. Component of the N-Cor repressor complex, at least composed of NCOR1, NCOR2, HDAC3, TBL1X, TBL1R, CORO2A and GPS2. Interacts with CBFA2T3 and ATXN1L. Interacts with RARB; the interaction is weak and does not repress RARB transactivational activity. Interacts (via 1D-myo-inositol 1,4,5,6-tetrakisphosphate) with HDAC3; promoting the histone deacetylase activity of HDAC3 (By similarity). Interacts with HDAC7 and C1D. Interacts with NR4A2; this interaction increases in the absence of PITX3. Interacts with BCL6 (via the BTB domain), required for BCL6 transcriptional repressor activity on a subset of target genes. Forms ternary complexes with BCOR and BCL6 on target gene promoters but, on enhancer elements, interacts with BCL6 and HDAC3 to repress proximal gene expression. May interact with DEAF1. Interacts with RXRA. Interacts with MECP2. Interacts with ZBTB7A (By similarity). Interacts with AR (By similarity). Interacts with TBL1Y (By similarity). Interacts with SANBR (via the BTB domain) (PubMed:33831416).</text>
</comment>
<comment type="interaction">
    <interactant intactId="EBI-6673326">
        <id>Q9WU42</id>
    </interactant>
    <interactant intactId="EBI-1189067">
        <id>P51608</id>
        <label>MECP2</label>
    </interactant>
    <organismsDiffer>true</organismsDiffer>
    <experiments>4</experiments>
</comment>
<comment type="subcellular location">
    <subcellularLocation>
        <location evidence="10">Nucleus</location>
    </subcellularLocation>
</comment>
<comment type="alternative products">
    <event type="alternative splicing"/>
    <isoform>
        <id>Q9WU42-1</id>
        <name>Alpha</name>
        <sequence type="displayed"/>
    </isoform>
    <isoform>
        <id>Q9WU42-2</id>
        <name>Beta</name>
        <sequence type="described" ref="VSP_003414"/>
    </isoform>
</comment>
<comment type="tissue specificity">
    <text evidence="6">Ubiquitous (PubMed:10077563). Also widely expressed in early embryos (PubMed:10077563).</text>
</comment>
<comment type="domain">
    <text evidence="2">The N-terminal region contains repression functions that are divided into three independent repression domains (RD1, RD2 and RD3). The C-terminal region contains the nuclear receptor-interacting domains that are divided in two separate interaction domains (ID1 and ID2).</text>
</comment>
<comment type="domain">
    <text evidence="1">The two interaction domains (ID) contain a conserved sequence referred to as the CORNR box. This motif is required and sufficient to permit binding to unligated TR and RARS. Sequences flanking the CORNR box determine nuclear hormone receptor specificity.</text>
</comment>
<comment type="domain">
    <text evidence="2">The deacetylase activation domain (DAD) promotes the recruitment and activation of HDAC3. Inositol tetraphosphate (1D-myo-inositol 1,4,5,6-tetrakisphosphate) acts as an intermolecular glue between HDAC3 and NCOR2.</text>
</comment>
<comment type="similarity">
    <text evidence="16">Belongs to the N-CoR nuclear receptor corepressors family.</text>
</comment>
<organism>
    <name type="scientific">Mus musculus</name>
    <name type="common">Mouse</name>
    <dbReference type="NCBI Taxonomy" id="10090"/>
    <lineage>
        <taxon>Eukaryota</taxon>
        <taxon>Metazoa</taxon>
        <taxon>Chordata</taxon>
        <taxon>Craniata</taxon>
        <taxon>Vertebrata</taxon>
        <taxon>Euteleostomi</taxon>
        <taxon>Mammalia</taxon>
        <taxon>Eutheria</taxon>
        <taxon>Euarchontoglires</taxon>
        <taxon>Glires</taxon>
        <taxon>Rodentia</taxon>
        <taxon>Myomorpha</taxon>
        <taxon>Muroidea</taxon>
        <taxon>Muridae</taxon>
        <taxon>Murinae</taxon>
        <taxon>Mus</taxon>
        <taxon>Mus</taxon>
    </lineage>
</organism>
<feature type="chain" id="PRO_0000055623" description="Nuclear receptor corepressor 2">
    <location>
        <begin position="1"/>
        <end position="2472"/>
    </location>
</feature>
<feature type="domain" description="SANT 1" evidence="4">
    <location>
        <begin position="427"/>
        <end position="478"/>
    </location>
</feature>
<feature type="domain" description="SANT 2" evidence="4">
    <location>
        <begin position="606"/>
        <end position="657"/>
    </location>
</feature>
<feature type="region of interest" description="Disordered" evidence="5">
    <location>
        <begin position="1"/>
        <end position="20"/>
    </location>
</feature>
<feature type="region of interest" description="Disordered" evidence="5">
    <location>
        <begin position="47"/>
        <end position="168"/>
    </location>
</feature>
<feature type="region of interest" description="Disordered" evidence="5">
    <location>
        <begin position="190"/>
        <end position="220"/>
    </location>
</feature>
<feature type="region of interest" description="Interaction with SIN3A/B" evidence="1">
    <location>
        <begin position="254"/>
        <end position="312"/>
    </location>
</feature>
<feature type="region of interest" description="Deacetylase activation domain (DAD)" evidence="2">
    <location>
        <begin position="389"/>
        <end position="480"/>
    </location>
</feature>
<feature type="region of interest" description="Disordered" evidence="5">
    <location>
        <begin position="487"/>
        <end position="618"/>
    </location>
</feature>
<feature type="region of interest" description="Disordered" evidence="5">
    <location>
        <begin position="665"/>
        <end position="1107"/>
    </location>
</feature>
<feature type="region of interest" description="Disordered" evidence="5">
    <location>
        <begin position="1173"/>
        <end position="1197"/>
    </location>
</feature>
<feature type="region of interest" description="Disordered" evidence="5">
    <location>
        <begin position="1254"/>
        <end position="1277"/>
    </location>
</feature>
<feature type="region of interest" description="Disordered" evidence="5">
    <location>
        <begin position="1345"/>
        <end position="1378"/>
    </location>
</feature>
<feature type="region of interest" description="Disordered" evidence="5">
    <location>
        <begin position="1410"/>
        <end position="1443"/>
    </location>
</feature>
<feature type="region of interest" description="Disordered" evidence="5">
    <location>
        <begin position="1479"/>
        <end position="1578"/>
    </location>
</feature>
<feature type="region of interest" description="Disordered" evidence="5">
    <location>
        <begin position="1734"/>
        <end position="1826"/>
    </location>
</feature>
<feature type="region of interest" description="Disordered" evidence="5">
    <location>
        <begin position="1857"/>
        <end position="1878"/>
    </location>
</feature>
<feature type="region of interest" description="Disordered" evidence="5">
    <location>
        <begin position="1898"/>
        <end position="1986"/>
    </location>
</feature>
<feature type="region of interest" description="Disordered" evidence="5">
    <location>
        <begin position="2001"/>
        <end position="2078"/>
    </location>
</feature>
<feature type="region of interest" description="Required for interaction with RARA in the absence of its ligand" evidence="2">
    <location>
        <begin position="2086"/>
        <end position="2090"/>
    </location>
</feature>
<feature type="region of interest" description="Disordered" evidence="5">
    <location>
        <begin position="2132"/>
        <end position="2226"/>
    </location>
</feature>
<feature type="region of interest" description="Disordered" evidence="5">
    <location>
        <begin position="2343"/>
        <end position="2459"/>
    </location>
</feature>
<feature type="coiled-coil region" evidence="3">
    <location>
        <begin position="165"/>
        <end position="207"/>
    </location>
</feature>
<feature type="coiled-coil region" evidence="3">
    <location>
        <begin position="492"/>
        <end position="560"/>
    </location>
</feature>
<feature type="coiled-coil region" evidence="3">
    <location>
        <begin position="658"/>
        <end position="682"/>
    </location>
</feature>
<feature type="short sequence motif" description="CORNR box of ID1" evidence="1">
    <location>
        <begin position="2094"/>
        <end position="2098"/>
    </location>
</feature>
<feature type="short sequence motif" description="CORNR box of ID2" evidence="1">
    <location>
        <begin position="2296"/>
        <end position="2300"/>
    </location>
</feature>
<feature type="compositionally biased region" description="Polar residues" evidence="5">
    <location>
        <begin position="51"/>
        <end position="60"/>
    </location>
</feature>
<feature type="compositionally biased region" description="Basic and acidic residues" evidence="5">
    <location>
        <begin position="78"/>
        <end position="88"/>
    </location>
</feature>
<feature type="compositionally biased region" description="Basic and acidic residues" evidence="5">
    <location>
        <begin position="96"/>
        <end position="112"/>
    </location>
</feature>
<feature type="compositionally biased region" description="Basic and acidic residues" evidence="5">
    <location>
        <begin position="203"/>
        <end position="212"/>
    </location>
</feature>
<feature type="compositionally biased region" description="Low complexity" evidence="5">
    <location>
        <begin position="494"/>
        <end position="507"/>
    </location>
</feature>
<feature type="compositionally biased region" description="Basic and acidic residues" evidence="5">
    <location>
        <begin position="512"/>
        <end position="548"/>
    </location>
</feature>
<feature type="compositionally biased region" description="Polar residues" evidence="5">
    <location>
        <begin position="592"/>
        <end position="609"/>
    </location>
</feature>
<feature type="compositionally biased region" description="Acidic residues" evidence="5">
    <location>
        <begin position="709"/>
        <end position="718"/>
    </location>
</feature>
<feature type="compositionally biased region" description="Polar residues" evidence="5">
    <location>
        <begin position="739"/>
        <end position="750"/>
    </location>
</feature>
<feature type="compositionally biased region" description="Pro residues" evidence="5">
    <location>
        <begin position="773"/>
        <end position="782"/>
    </location>
</feature>
<feature type="compositionally biased region" description="Pro residues" evidence="5">
    <location>
        <begin position="789"/>
        <end position="811"/>
    </location>
</feature>
<feature type="compositionally biased region" description="Basic and acidic residues" evidence="5">
    <location>
        <begin position="831"/>
        <end position="850"/>
    </location>
</feature>
<feature type="compositionally biased region" description="Basic and acidic residues" evidence="5">
    <location>
        <begin position="859"/>
        <end position="868"/>
    </location>
</feature>
<feature type="compositionally biased region" description="Low complexity" evidence="5">
    <location>
        <begin position="905"/>
        <end position="919"/>
    </location>
</feature>
<feature type="compositionally biased region" description="Basic and acidic residues" evidence="5">
    <location>
        <begin position="978"/>
        <end position="988"/>
    </location>
</feature>
<feature type="compositionally biased region" description="Pro residues" evidence="5">
    <location>
        <begin position="989"/>
        <end position="1000"/>
    </location>
</feature>
<feature type="compositionally biased region" description="Low complexity" evidence="5">
    <location>
        <begin position="1090"/>
        <end position="1101"/>
    </location>
</feature>
<feature type="compositionally biased region" description="Basic and acidic residues" evidence="5">
    <location>
        <begin position="1359"/>
        <end position="1368"/>
    </location>
</feature>
<feature type="compositionally biased region" description="Low complexity" evidence="5">
    <location>
        <begin position="1740"/>
        <end position="1753"/>
    </location>
</feature>
<feature type="compositionally biased region" description="Basic and acidic residues" evidence="5">
    <location>
        <begin position="1765"/>
        <end position="1778"/>
    </location>
</feature>
<feature type="compositionally biased region" description="Polar residues" evidence="5">
    <location>
        <begin position="1807"/>
        <end position="1826"/>
    </location>
</feature>
<feature type="compositionally biased region" description="Basic and acidic residues" evidence="5">
    <location>
        <begin position="1899"/>
        <end position="1913"/>
    </location>
</feature>
<feature type="compositionally biased region" description="Low complexity" evidence="5">
    <location>
        <begin position="1925"/>
        <end position="1938"/>
    </location>
</feature>
<feature type="compositionally biased region" description="Basic and acidic residues" evidence="5">
    <location>
        <begin position="2020"/>
        <end position="2043"/>
    </location>
</feature>
<feature type="compositionally biased region" description="Low complexity" evidence="5">
    <location>
        <begin position="2064"/>
        <end position="2075"/>
    </location>
</feature>
<feature type="compositionally biased region" description="Low complexity" evidence="5">
    <location>
        <begin position="2439"/>
        <end position="2450"/>
    </location>
</feature>
<feature type="binding site" evidence="2">
    <location>
        <position position="449"/>
    </location>
    <ligand>
        <name>1D-myo-inositol 1,4,5,6-tetrakisphosphate</name>
        <dbReference type="ChEBI" id="CHEBI:57627"/>
    </ligand>
</feature>
<feature type="binding site" evidence="2">
    <location>
        <position position="470"/>
    </location>
    <ligand>
        <name>1D-myo-inositol 1,4,5,6-tetrakisphosphate</name>
        <dbReference type="ChEBI" id="CHEBI:57627"/>
    </ligand>
</feature>
<feature type="binding site" evidence="2">
    <location>
        <position position="471"/>
    </location>
    <ligand>
        <name>1D-myo-inositol 1,4,5,6-tetrakisphosphate</name>
        <dbReference type="ChEBI" id="CHEBI:57627"/>
    </ligand>
</feature>
<feature type="modified residue" description="Asymmetric dimethylarginine" evidence="21">
    <location>
        <position position="18"/>
    </location>
</feature>
<feature type="modified residue" description="Phosphoserine" evidence="2">
    <location>
        <position position="54"/>
    </location>
</feature>
<feature type="modified residue" description="Phosphoserine" evidence="2">
    <location>
        <position position="67"/>
    </location>
</feature>
<feature type="modified residue" description="Phosphoserine" evidence="19">
    <location>
        <position position="149"/>
    </location>
</feature>
<feature type="modified residue" description="Phosphoserine" evidence="19">
    <location>
        <position position="152"/>
    </location>
</feature>
<feature type="modified residue" description="Phosphoserine" evidence="2">
    <location>
        <position position="215"/>
    </location>
</feature>
<feature type="modified residue" description="Phosphoserine" evidence="2">
    <location>
        <position position="493"/>
    </location>
</feature>
<feature type="modified residue" description="Phosphothreonine" evidence="19">
    <location>
        <position position="549"/>
    </location>
</feature>
<feature type="modified residue" description="Phosphoserine" evidence="17 19">
    <location>
        <position position="550"/>
    </location>
</feature>
<feature type="modified residue" description="Phosphoserine" evidence="19">
    <location>
        <position position="747"/>
    </location>
</feature>
<feature type="modified residue" description="Phosphoserine" evidence="19">
    <location>
        <position position="750"/>
    </location>
</feature>
<feature type="modified residue" description="N6-acetyllysine" evidence="2">
    <location>
        <position position="878"/>
    </location>
</feature>
<feature type="modified residue" description="Phosphoserine" evidence="2">
    <location>
        <position position="938"/>
    </location>
</feature>
<feature type="modified residue" description="Phosphothreonine" evidence="2">
    <location>
        <position position="945"/>
    </location>
</feature>
<feature type="modified residue" description="Phosphoserine" evidence="2">
    <location>
        <position position="955"/>
    </location>
</feature>
<feature type="modified residue" description="N6-acetyllysine" evidence="2">
    <location>
        <position position="958"/>
    </location>
</feature>
<feature type="modified residue" description="N6-acetyllysine" evidence="2">
    <location>
        <position position="1181"/>
    </location>
</feature>
<feature type="modified residue" description="N6-acetyllysine" evidence="2">
    <location>
        <position position="1209"/>
    </location>
</feature>
<feature type="modified residue" description="Phosphoserine" evidence="2">
    <location>
        <position position="1220"/>
    </location>
</feature>
<feature type="modified residue" description="Phosphothreonine" evidence="19">
    <location>
        <position position="1350"/>
    </location>
</feature>
<feature type="modified residue" description="Phosphoserine" evidence="2">
    <location>
        <position position="1449"/>
    </location>
</feature>
<feature type="modified residue" description="Phosphoserine" evidence="2">
    <location>
        <position position="1509"/>
    </location>
</feature>
<feature type="modified residue" description="Phosphoserine" evidence="19">
    <location>
        <position position="1565"/>
    </location>
</feature>
<feature type="modified residue" description="Asymmetric dimethylarginine" evidence="2">
    <location>
        <position position="1624"/>
    </location>
</feature>
<feature type="modified residue" description="Phosphoserine" evidence="2">
    <location>
        <position position="1746"/>
    </location>
</feature>
<feature type="modified residue" description="Phosphoserine" evidence="19">
    <location>
        <position position="1749"/>
    </location>
</feature>
<feature type="modified residue" description="Phosphoserine" evidence="2">
    <location>
        <position position="1819"/>
    </location>
</feature>
<feature type="modified residue" description="Omega-N-methylarginine" evidence="21">
    <location>
        <position position="1854"/>
    </location>
</feature>
<feature type="modified residue" description="N6-acetyllysine" evidence="2">
    <location>
        <position position="1920"/>
    </location>
</feature>
<feature type="modified residue" description="Phosphoserine" evidence="2">
    <location>
        <position position="1963"/>
    </location>
</feature>
<feature type="modified residue" description="N6-acetyllysine" evidence="20">
    <location>
        <position position="1983"/>
    </location>
</feature>
<feature type="modified residue" description="Phosphoserine" evidence="19">
    <location>
        <position position="2004"/>
    </location>
</feature>
<feature type="modified residue" description="Phosphoserine" evidence="19">
    <location>
        <position position="2012"/>
    </location>
</feature>
<feature type="modified residue" description="Phosphoserine" evidence="19">
    <location>
        <position position="2015"/>
    </location>
</feature>
<feature type="modified residue" description="Phosphoserine" evidence="19">
    <location>
        <position position="2016"/>
    </location>
</feature>
<feature type="modified residue" description="Phosphoserine" evidence="19">
    <location>
        <position position="2018"/>
    </location>
</feature>
<feature type="modified residue" description="Phosphothreonine" evidence="19">
    <location>
        <position position="2020"/>
    </location>
</feature>
<feature type="modified residue" description="Phosphoserine" evidence="2">
    <location>
        <position position="2035"/>
    </location>
</feature>
<feature type="modified residue" description="Phosphoserine" evidence="2">
    <location>
        <position position="2161"/>
    </location>
</feature>
<feature type="modified residue" description="Phosphoserine" evidence="18 19">
    <location>
        <position position="2181"/>
    </location>
</feature>
<feature type="modified residue" description="Phosphoserine" evidence="17 19">
    <location>
        <position position="2215"/>
    </location>
</feature>
<feature type="modified residue" description="Phosphoserine" evidence="2">
    <location>
        <position position="2371"/>
    </location>
</feature>
<feature type="splice variant" id="VSP_003414" description="In isoform Beta." evidence="14">
    <location>
        <begin position="36"/>
        <end position="254"/>
    </location>
</feature>
<feature type="sequence conflict" description="In Ref. 2; AAD22972." evidence="16" ref="2">
    <original>M</original>
    <variation>RL</variation>
    <location>
        <position position="176"/>
    </location>
</feature>
<feature type="sequence conflict" description="In Ref. 2; AAD22972." evidence="16" ref="2">
    <original>PPMLYDA</original>
    <variation>RHVVRR</variation>
    <location>
        <begin position="396"/>
        <end position="402"/>
    </location>
</feature>
<feature type="sequence conflict" description="In Ref. 1; AAD20944." evidence="16" ref="1">
    <original>D</original>
    <variation>H</variation>
    <location>
        <position position="555"/>
    </location>
</feature>
<feature type="sequence conflict" description="In Ref. 1; AAD20944." evidence="16" ref="1">
    <original>T</original>
    <variation>M</variation>
    <location>
        <position position="756"/>
    </location>
</feature>
<feature type="sequence conflict" description="In Ref. 2; AAD22972." evidence="16" ref="2">
    <original>V</original>
    <variation>A</variation>
    <location>
        <position position="785"/>
    </location>
</feature>
<feature type="sequence conflict" description="In Ref. 1; AAD20944/AAD20945." evidence="16" ref="1">
    <original>PSPAAPPATVDKDEQEAPAAPAPQTEDAKEQKSEAEEIDVG</original>
    <variation>HHLPHPRLLWTRMNKKPRLLQLPRQRMPRSRSLRPRRSMWE</variation>
    <location>
        <begin position="806"/>
        <end position="846"/>
    </location>
</feature>
<feature type="sequence conflict" description="In Ref. 1; AAD20945." evidence="16" ref="1">
    <original>E</original>
    <variation>K</variation>
    <location>
        <position position="856"/>
    </location>
</feature>
<feature type="sequence conflict" description="In Ref. 1; AAD20945." evidence="16" ref="1">
    <original>E</original>
    <variation>K</variation>
    <location>
        <position position="859"/>
    </location>
</feature>
<feature type="sequence conflict" description="In Ref. 1; AAD20945." evidence="16" ref="1">
    <original>E</original>
    <variation>K</variation>
    <location>
        <position position="867"/>
    </location>
</feature>
<feature type="sequence conflict" description="In Ref. 1; AAD20945." evidence="16" ref="1">
    <original>E</original>
    <variation>K</variation>
    <location>
        <position position="895"/>
    </location>
</feature>
<feature type="sequence conflict" description="In Ref. 1; AAD20944." evidence="16" ref="1">
    <original>S</original>
    <variation>F</variation>
    <location>
        <position position="916"/>
    </location>
</feature>
<feature type="sequence conflict" description="In Ref. 1; AAD20944." evidence="16" ref="1">
    <original>I</original>
    <variation>IQ</variation>
    <location>
        <position position="975"/>
    </location>
</feature>
<feature type="sequence conflict" description="In Ref. 2; AAD22972." evidence="16" ref="2">
    <original>PKLPTEPPRWSSGLPFPI</original>
    <variation>QSYRLSPHAGHRLPSH</variation>
    <location>
        <begin position="1046"/>
        <end position="1063"/>
    </location>
</feature>
<feature type="sequence conflict" description="In Ref. 2; AAD22972." evidence="16" ref="2">
    <original>PHAADPSA</original>
    <variation>TRADPL</variation>
    <location>
        <begin position="1073"/>
        <end position="1080"/>
    </location>
</feature>
<feature type="sequence conflict" description="In Ref. 2; AAD22972." evidence="16" ref="2">
    <location>
        <position position="1133"/>
    </location>
</feature>
<feature type="sequence conflict" description="In Ref. 2; AAD22972." evidence="16" ref="2">
    <location>
        <position position="1149"/>
    </location>
</feature>
<feature type="sequence conflict" description="In Ref. 2; AAD22972." evidence="16" ref="2">
    <original>G</original>
    <variation>E</variation>
    <location>
        <position position="1157"/>
    </location>
</feature>
<feature type="sequence conflict" description="In Ref. 2; AAD22972." evidence="16" ref="2">
    <original>GSATSGSITKGLPSTRAADGPSYRGSITHG</original>
    <variation>APPPVEASPRASQYPGCRRPQLQRLYHPR</variation>
    <location>
        <begin position="1172"/>
        <end position="1201"/>
    </location>
</feature>
<feature type="sequence conflict" description="In Ref. 2; AAD22972." evidence="16" ref="2">
    <original>A</original>
    <variation>S</variation>
    <location>
        <position position="1696"/>
    </location>
</feature>
<feature type="sequence conflict" description="In Ref. 2; AAD22972." evidence="16" ref="2">
    <location>
        <begin position="1855"/>
        <end position="1857"/>
    </location>
</feature>
<feature type="sequence conflict" description="In Ref. 1; AAD20944/AAD20945." evidence="16" ref="1">
    <original>P</original>
    <variation>A</variation>
    <location>
        <position position="1909"/>
    </location>
</feature>
<feature type="sequence conflict" description="In Ref. 2; AAD22972." evidence="16" ref="2">
    <original>A</original>
    <variation>G</variation>
    <location>
        <position position="1913"/>
    </location>
</feature>
<feature type="sequence conflict" description="In Ref. 1; AAD20944/AAD20945." evidence="16" ref="1">
    <original>A</original>
    <variation>G</variation>
    <location>
        <position position="1923"/>
    </location>
</feature>
<feature type="sequence conflict" description="In Ref. 2; AAD22972." evidence="16" ref="2">
    <original>N</original>
    <variation>S</variation>
    <location>
        <position position="1956"/>
    </location>
</feature>
<feature type="sequence conflict" description="In Ref. 2; AAD22972." evidence="16" ref="2">
    <original>A</original>
    <variation>G</variation>
    <location>
        <position position="1968"/>
    </location>
</feature>
<feature type="sequence conflict" description="In Ref. 2; AAD22972." evidence="16" ref="2">
    <original>TA</original>
    <variation>AV</variation>
    <location>
        <begin position="2195"/>
        <end position="2196"/>
    </location>
</feature>
<feature type="sequence conflict" description="In Ref. 1; AAD20944." evidence="16" ref="1">
    <original>SK</original>
    <variation>LE</variation>
    <location>
        <begin position="2213"/>
        <end position="2214"/>
    </location>
</feature>
<feature type="sequence conflict" description="In Ref. 1; AAD20944." evidence="16" ref="1">
    <original>A</original>
    <variation>T</variation>
    <location>
        <position position="2224"/>
    </location>
</feature>
<accession>Q9WU42</accession>
<accession>E9Q9V0</accession>
<accession>Q9WU43</accession>
<accession>Q9WUC1</accession>
<dbReference type="EMBL" id="AF113001">
    <property type="protein sequence ID" value="AAD20944.1"/>
    <property type="molecule type" value="mRNA"/>
</dbReference>
<dbReference type="EMBL" id="AF113002">
    <property type="protein sequence ID" value="AAD20945.1"/>
    <property type="molecule type" value="mRNA"/>
</dbReference>
<dbReference type="EMBL" id="AF125671">
    <property type="protein sequence ID" value="AAD22972.1"/>
    <property type="molecule type" value="mRNA"/>
</dbReference>
<dbReference type="EMBL" id="AC132118">
    <property type="status" value="NOT_ANNOTATED_CDS"/>
    <property type="molecule type" value="Genomic_DNA"/>
</dbReference>
<dbReference type="EMBL" id="AC139377">
    <property type="status" value="NOT_ANNOTATED_CDS"/>
    <property type="molecule type" value="Genomic_DNA"/>
</dbReference>
<dbReference type="CCDS" id="CCDS57382.1">
    <molecule id="Q9WU42-2"/>
</dbReference>
<dbReference type="RefSeq" id="NP_001240833.1">
    <property type="nucleotide sequence ID" value="NM_001253904.1"/>
</dbReference>
<dbReference type="RefSeq" id="NP_001240834.1">
    <molecule id="Q9WU42-2"/>
    <property type="nucleotide sequence ID" value="NM_001253905.1"/>
</dbReference>
<dbReference type="RefSeq" id="XP_011239133.1">
    <molecule id="Q9WU42-1"/>
    <property type="nucleotide sequence ID" value="XM_011240831.3"/>
</dbReference>
<dbReference type="BMRB" id="Q9WU42"/>
<dbReference type="SMR" id="Q9WU42"/>
<dbReference type="BioGRID" id="203350">
    <property type="interactions" value="25"/>
</dbReference>
<dbReference type="CORUM" id="Q9WU42"/>
<dbReference type="DIP" id="DIP-42595N"/>
<dbReference type="FunCoup" id="Q9WU42">
    <property type="interactions" value="1916"/>
</dbReference>
<dbReference type="IntAct" id="Q9WU42">
    <property type="interactions" value="8"/>
</dbReference>
<dbReference type="MINT" id="Q9WU42"/>
<dbReference type="STRING" id="10090.ENSMUSP00000083250"/>
<dbReference type="GlyGen" id="Q9WU42">
    <property type="glycosylation" value="20 sites, 1 N-linked glycan (1 site), 1 O-linked glycan (16 sites)"/>
</dbReference>
<dbReference type="iPTMnet" id="Q9WU42"/>
<dbReference type="PhosphoSitePlus" id="Q9WU42"/>
<dbReference type="jPOST" id="Q9WU42"/>
<dbReference type="PaxDb" id="10090-ENSMUSP00000107033"/>
<dbReference type="PeptideAtlas" id="Q9WU42"/>
<dbReference type="ProteomicsDB" id="252659">
    <molecule id="Q9WU42-1"/>
</dbReference>
<dbReference type="ProteomicsDB" id="252660">
    <molecule id="Q9WU42-2"/>
</dbReference>
<dbReference type="Pumba" id="Q9WU42"/>
<dbReference type="Antibodypedia" id="1103">
    <property type="antibodies" value="280 antibodies from 37 providers"/>
</dbReference>
<dbReference type="DNASU" id="20602"/>
<dbReference type="Ensembl" id="ENSMUST00000111394.8">
    <molecule id="Q9WU42-2"/>
    <property type="protein sequence ID" value="ENSMUSP00000107025.2"/>
    <property type="gene ID" value="ENSMUSG00000029478.17"/>
</dbReference>
<dbReference type="Ensembl" id="ENSMUST00000111398.8">
    <molecule id="Q9WU42-1"/>
    <property type="protein sequence ID" value="ENSMUSP00000107029.2"/>
    <property type="gene ID" value="ENSMUSG00000029478.17"/>
</dbReference>
<dbReference type="GeneID" id="20602"/>
<dbReference type="KEGG" id="mmu:20602"/>
<dbReference type="UCSC" id="uc008zra.2">
    <molecule id="Q9WU42-2"/>
    <property type="organism name" value="mouse"/>
</dbReference>
<dbReference type="AGR" id="MGI:1337080"/>
<dbReference type="CTD" id="9612"/>
<dbReference type="MGI" id="MGI:1337080">
    <property type="gene designation" value="Ncor2"/>
</dbReference>
<dbReference type="VEuPathDB" id="HostDB:ENSMUSG00000029478"/>
<dbReference type="eggNOG" id="KOG1878">
    <property type="taxonomic scope" value="Eukaryota"/>
</dbReference>
<dbReference type="GeneTree" id="ENSGT00940000159022"/>
<dbReference type="InParanoid" id="Q9WU42"/>
<dbReference type="OrthoDB" id="10258692at2759"/>
<dbReference type="Reactome" id="R-MMU-2173795">
    <property type="pathway name" value="Downregulation of SMAD2/3:SMAD4 transcriptional activity"/>
</dbReference>
<dbReference type="Reactome" id="R-MMU-3214815">
    <property type="pathway name" value="HDACs deacetylate histones"/>
</dbReference>
<dbReference type="Reactome" id="R-MMU-350054">
    <property type="pathway name" value="Notch-HLH transcription pathway"/>
</dbReference>
<dbReference type="Reactome" id="R-MMU-381340">
    <property type="pathway name" value="Transcriptional regulation of white adipocyte differentiation"/>
</dbReference>
<dbReference type="Reactome" id="R-MMU-383280">
    <property type="pathway name" value="Nuclear Receptor transcription pathway"/>
</dbReference>
<dbReference type="Reactome" id="R-MMU-400206">
    <property type="pathway name" value="Regulation of lipid metabolism by PPARalpha"/>
</dbReference>
<dbReference type="Reactome" id="R-MMU-9029569">
    <property type="pathway name" value="NR1H3 &amp; NR1H2 regulate gene expression linked to cholesterol transport and efflux"/>
</dbReference>
<dbReference type="Reactome" id="R-MMU-9623433">
    <property type="pathway name" value="NR1H2 &amp; NR1H3 regulate gene expression to control bile acid homeostasis"/>
</dbReference>
<dbReference type="Reactome" id="R-MMU-9707564">
    <property type="pathway name" value="Cytoprotection by HMOX1"/>
</dbReference>
<dbReference type="Reactome" id="R-MMU-9841922">
    <property type="pathway name" value="MLL4 and MLL3 complexes regulate expression of PPARG target genes in adipogenesis and hepatic steatosis"/>
</dbReference>
<dbReference type="BioGRID-ORCS" id="20602">
    <property type="hits" value="9 hits in 84 CRISPR screens"/>
</dbReference>
<dbReference type="ChiTaRS" id="Ncor2">
    <property type="organism name" value="mouse"/>
</dbReference>
<dbReference type="PRO" id="PR:Q9WU42"/>
<dbReference type="Proteomes" id="UP000000589">
    <property type="component" value="Chromosome 5"/>
</dbReference>
<dbReference type="RNAct" id="Q9WU42">
    <property type="molecule type" value="protein"/>
</dbReference>
<dbReference type="Bgee" id="ENSMUSG00000029478">
    <property type="expression patterns" value="Expressed in superior frontal gyrus and 270 other cell types or tissues"/>
</dbReference>
<dbReference type="ExpressionAtlas" id="Q9WU42">
    <property type="expression patterns" value="baseline and differential"/>
</dbReference>
<dbReference type="GO" id="GO:0000118">
    <property type="term" value="C:histone deacetylase complex"/>
    <property type="evidence" value="ECO:0000314"/>
    <property type="project" value="MGI"/>
</dbReference>
<dbReference type="GO" id="GO:0016604">
    <property type="term" value="C:nuclear body"/>
    <property type="evidence" value="ECO:0000314"/>
    <property type="project" value="MGI"/>
</dbReference>
<dbReference type="GO" id="GO:0016363">
    <property type="term" value="C:nuclear matrix"/>
    <property type="evidence" value="ECO:0000250"/>
    <property type="project" value="UniProtKB"/>
</dbReference>
<dbReference type="GO" id="GO:0005654">
    <property type="term" value="C:nucleoplasm"/>
    <property type="evidence" value="ECO:0000304"/>
    <property type="project" value="Reactome"/>
</dbReference>
<dbReference type="GO" id="GO:0005634">
    <property type="term" value="C:nucleus"/>
    <property type="evidence" value="ECO:0000266"/>
    <property type="project" value="MGI"/>
</dbReference>
<dbReference type="GO" id="GO:0003682">
    <property type="term" value="F:chromatin binding"/>
    <property type="evidence" value="ECO:0000314"/>
    <property type="project" value="MGI"/>
</dbReference>
<dbReference type="GO" id="GO:0003677">
    <property type="term" value="F:DNA binding"/>
    <property type="evidence" value="ECO:0000314"/>
    <property type="project" value="MGI"/>
</dbReference>
<dbReference type="GO" id="GO:0043565">
    <property type="term" value="F:sequence-specific DNA binding"/>
    <property type="evidence" value="ECO:0000314"/>
    <property type="project" value="MGI"/>
</dbReference>
<dbReference type="GO" id="GO:1990837">
    <property type="term" value="F:sequence-specific double-stranded DNA binding"/>
    <property type="evidence" value="ECO:0000314"/>
    <property type="project" value="MGI"/>
</dbReference>
<dbReference type="GO" id="GO:0003714">
    <property type="term" value="F:transcription corepressor activity"/>
    <property type="evidence" value="ECO:0000314"/>
    <property type="project" value="UniProtKB"/>
</dbReference>
<dbReference type="GO" id="GO:0021846">
    <property type="term" value="P:cell proliferation in forebrain"/>
    <property type="evidence" value="ECO:0000315"/>
    <property type="project" value="MGI"/>
</dbReference>
<dbReference type="GO" id="GO:0008544">
    <property type="term" value="P:epidermis development"/>
    <property type="evidence" value="ECO:0000316"/>
    <property type="project" value="MGI"/>
</dbReference>
<dbReference type="GO" id="GO:0061436">
    <property type="term" value="P:establishment of skin barrier"/>
    <property type="evidence" value="ECO:0000316"/>
    <property type="project" value="MGI"/>
</dbReference>
<dbReference type="GO" id="GO:0030900">
    <property type="term" value="P:forebrain development"/>
    <property type="evidence" value="ECO:0000315"/>
    <property type="project" value="MGI"/>
</dbReference>
<dbReference type="GO" id="GO:0010467">
    <property type="term" value="P:gene expression"/>
    <property type="evidence" value="ECO:0000316"/>
    <property type="project" value="MGI"/>
</dbReference>
<dbReference type="GO" id="GO:0042593">
    <property type="term" value="P:glucose homeostasis"/>
    <property type="evidence" value="ECO:0000315"/>
    <property type="project" value="MGI"/>
</dbReference>
<dbReference type="GO" id="GO:0003007">
    <property type="term" value="P:heart morphogenesis"/>
    <property type="evidence" value="ECO:0000315"/>
    <property type="project" value="MGI"/>
</dbReference>
<dbReference type="GO" id="GO:0001701">
    <property type="term" value="P:in utero embryonic development"/>
    <property type="evidence" value="ECO:0000315"/>
    <property type="project" value="MGI"/>
</dbReference>
<dbReference type="GO" id="GO:0045892">
    <property type="term" value="P:negative regulation of DNA-templated transcription"/>
    <property type="evidence" value="ECO:0000314"/>
    <property type="project" value="MGI"/>
</dbReference>
<dbReference type="GO" id="GO:0045599">
    <property type="term" value="P:negative regulation of fat cell differentiation"/>
    <property type="evidence" value="ECO:0000315"/>
    <property type="project" value="MGI"/>
</dbReference>
<dbReference type="GO" id="GO:0000122">
    <property type="term" value="P:negative regulation of transcription by RNA polymerase II"/>
    <property type="evidence" value="ECO:0000314"/>
    <property type="project" value="MGI"/>
</dbReference>
<dbReference type="GO" id="GO:0050821">
    <property type="term" value="P:protein stabilization"/>
    <property type="evidence" value="ECO:0000316"/>
    <property type="project" value="MGI"/>
</dbReference>
<dbReference type="GO" id="GO:0060816">
    <property type="term" value="P:random inactivation of X chromosome"/>
    <property type="evidence" value="ECO:0000315"/>
    <property type="project" value="FlyBase"/>
</dbReference>
<dbReference type="GO" id="GO:0021537">
    <property type="term" value="P:telencephalon development"/>
    <property type="evidence" value="ECO:0000315"/>
    <property type="project" value="MGI"/>
</dbReference>
<dbReference type="GO" id="GO:0060509">
    <property type="term" value="P:type I pneumocyte differentiation"/>
    <property type="evidence" value="ECO:0000315"/>
    <property type="project" value="MGI"/>
</dbReference>
<dbReference type="GO" id="GO:0050872">
    <property type="term" value="P:white fat cell differentiation"/>
    <property type="evidence" value="ECO:0000315"/>
    <property type="project" value="MGI"/>
</dbReference>
<dbReference type="CDD" id="cd00167">
    <property type="entry name" value="SANT"/>
    <property type="match status" value="1"/>
</dbReference>
<dbReference type="FunFam" id="1.10.10.60:FF:000026">
    <property type="entry name" value="Nuclear receptor corepressor 2 isoform 1"/>
    <property type="match status" value="1"/>
</dbReference>
<dbReference type="FunFam" id="1.20.5.430:FF:000001">
    <property type="entry name" value="Nuclear receptor corepressor 2 isoform 1"/>
    <property type="match status" value="1"/>
</dbReference>
<dbReference type="FunFam" id="1.20.58.1880:FF:000002">
    <property type="entry name" value="nuclear receptor corepressor 2 isoform X1"/>
    <property type="match status" value="1"/>
</dbReference>
<dbReference type="Gene3D" id="1.20.5.430">
    <property type="match status" value="1"/>
</dbReference>
<dbReference type="Gene3D" id="1.20.58.1880">
    <property type="match status" value="1"/>
</dbReference>
<dbReference type="Gene3D" id="1.10.10.60">
    <property type="entry name" value="Homeodomain-like"/>
    <property type="match status" value="1"/>
</dbReference>
<dbReference type="InterPro" id="IPR009057">
    <property type="entry name" value="Homeodomain-like_sf"/>
</dbReference>
<dbReference type="InterPro" id="IPR017930">
    <property type="entry name" value="Myb_dom"/>
</dbReference>
<dbReference type="InterPro" id="IPR051571">
    <property type="entry name" value="N-CoR_corepressor"/>
</dbReference>
<dbReference type="InterPro" id="IPR031557">
    <property type="entry name" value="N-CoR_GPS2_interact"/>
</dbReference>
<dbReference type="InterPro" id="IPR001005">
    <property type="entry name" value="SANT/Myb"/>
</dbReference>
<dbReference type="InterPro" id="IPR017884">
    <property type="entry name" value="SANT_dom"/>
</dbReference>
<dbReference type="PANTHER" id="PTHR13992">
    <property type="entry name" value="NUCLEAR RECEPTOR CO-REPRESSOR RELATED NCOR"/>
    <property type="match status" value="1"/>
</dbReference>
<dbReference type="PANTHER" id="PTHR13992:SF21">
    <property type="entry name" value="NUCLEAR RECEPTOR COREPRESSOR 2"/>
    <property type="match status" value="1"/>
</dbReference>
<dbReference type="Pfam" id="PF15784">
    <property type="entry name" value="GPS2_interact"/>
    <property type="match status" value="1"/>
</dbReference>
<dbReference type="Pfam" id="PF00249">
    <property type="entry name" value="Myb_DNA-binding"/>
    <property type="match status" value="2"/>
</dbReference>
<dbReference type="SMART" id="SM00717">
    <property type="entry name" value="SANT"/>
    <property type="match status" value="2"/>
</dbReference>
<dbReference type="SUPFAM" id="SSF46689">
    <property type="entry name" value="Homeodomain-like"/>
    <property type="match status" value="2"/>
</dbReference>
<dbReference type="PROSITE" id="PS51293">
    <property type="entry name" value="SANT"/>
    <property type="match status" value="2"/>
</dbReference>
<gene>
    <name type="primary">Ncor2</name>
    <name evidence="14" type="synonym">Smrt</name>
</gene>
<reference key="1">
    <citation type="journal article" date="1999" name="Proc. Natl. Acad. Sci. U.S.A.">
        <title>Unique forms of human and mouse nuclear receptor corepressor SMRT.</title>
        <authorList>
            <person name="Ordentlich P."/>
            <person name="Downes M."/>
            <person name="Xie W."/>
            <person name="Genin A."/>
            <person name="Spinner N.B."/>
            <person name="Evans R.M."/>
        </authorList>
    </citation>
    <scope>NUCLEOTIDE SEQUENCE [MRNA] (ISOFORMS ALPHA AND BETA)</scope>
    <scope>TISSUE SPECIFICITY</scope>
    <source>
        <tissue>Brain</tissue>
        <tissue>Spleen</tissue>
    </source>
</reference>
<reference key="2">
    <citation type="journal article" date="1999" name="Proc. Natl. Acad. Sci. U.S.A.">
        <title>SMRTe, a silencing mediator for retinoid and thyroid hormone receptors-extended isoform that is more related to the nuclear receptor corepressor.</title>
        <authorList>
            <person name="Park E.J."/>
            <person name="Schroen D.J."/>
            <person name="Yang M."/>
            <person name="Li H."/>
            <person name="Li L."/>
            <person name="Chen J.D."/>
        </authorList>
    </citation>
    <scope>NUCLEOTIDE SEQUENCE [MRNA] (ISOFORM ALPHA)</scope>
    <source>
        <tissue>Embryo</tissue>
    </source>
</reference>
<reference key="3">
    <citation type="journal article" date="2009" name="PLoS Biol.">
        <title>Lineage-specific biology revealed by a finished genome assembly of the mouse.</title>
        <authorList>
            <person name="Church D.M."/>
            <person name="Goodstadt L."/>
            <person name="Hillier L.W."/>
            <person name="Zody M.C."/>
            <person name="Goldstein S."/>
            <person name="She X."/>
            <person name="Bult C.J."/>
            <person name="Agarwala R."/>
            <person name="Cherry J.L."/>
            <person name="DiCuccio M."/>
            <person name="Hlavina W."/>
            <person name="Kapustin Y."/>
            <person name="Meric P."/>
            <person name="Maglott D."/>
            <person name="Birtle Z."/>
            <person name="Marques A.C."/>
            <person name="Graves T."/>
            <person name="Zhou S."/>
            <person name="Teague B."/>
            <person name="Potamousis K."/>
            <person name="Churas C."/>
            <person name="Place M."/>
            <person name="Herschleb J."/>
            <person name="Runnheim R."/>
            <person name="Forrest D."/>
            <person name="Amos-Landgraf J."/>
            <person name="Schwartz D.C."/>
            <person name="Cheng Z."/>
            <person name="Lindblad-Toh K."/>
            <person name="Eichler E.E."/>
            <person name="Ponting C.P."/>
        </authorList>
    </citation>
    <scope>NUCLEOTIDE SEQUENCE [LARGE SCALE GENOMIC DNA]</scope>
    <source>
        <strain>C57BL/6J</strain>
    </source>
</reference>
<reference key="4">
    <citation type="journal article" date="1997" name="Proc. Natl. Acad. Sci. U.S.A.">
        <title>Cloning and characterization of a corepressor and potential component of the nuclear hormone receptor repression complex.</title>
        <authorList>
            <person name="Zamir I."/>
            <person name="Dawson J."/>
            <person name="Lavinsky R.M."/>
            <person name="Glass C.K."/>
            <person name="Rosenfeld M.G."/>
            <person name="Lazar M.A."/>
        </authorList>
    </citation>
    <scope>INTERACTION WITH C1D</scope>
</reference>
<reference key="5">
    <citation type="journal article" date="2000" name="Genes Dev.">
        <title>Isolation of a novel histone deacetylase reveals that class I and class II deacetylases promote SMRT-mediated repression.</title>
        <authorList>
            <person name="Kao H.-Y."/>
            <person name="Downes M."/>
            <person name="Ordentlich P."/>
            <person name="Evans R.M."/>
        </authorList>
    </citation>
    <scope>INTERACTION WITH HDAC7</scope>
</reference>
<reference key="6">
    <citation type="journal article" date="2001" name="Mol. Cell. Biol.">
        <title>ETO, a target of t(8;21) in acute leukemia, makes distinct contacts with multiple histone deacetylases and binds mSin3A through its oligomerization domain.</title>
        <authorList>
            <person name="Amann J.M."/>
            <person name="Nip J."/>
            <person name="Strom D.K."/>
            <person name="Lutterbach B."/>
            <person name="Harada H."/>
            <person name="Lenny N."/>
            <person name="Downing J.R."/>
            <person name="Meyers S."/>
            <person name="Hiebert S.W."/>
        </authorList>
    </citation>
    <scope>INTERACTION WITH CBFA2T3</scope>
</reference>
<reference key="7">
    <citation type="journal article" date="2007" name="Proc. Natl. Acad. Sci. U.S.A.">
        <title>Large-scale phosphorylation analysis of mouse liver.</title>
        <authorList>
            <person name="Villen J."/>
            <person name="Beausoleil S.A."/>
            <person name="Gerber S.A."/>
            <person name="Gygi S.P."/>
        </authorList>
    </citation>
    <scope>PHOSPHORYLATION [LARGE SCALE ANALYSIS] AT SER-550 AND SER-2215</scope>
    <scope>IDENTIFICATION BY MASS SPECTROMETRY [LARGE SCALE ANALYSIS]</scope>
    <source>
        <tissue>Liver</tissue>
    </source>
</reference>
<reference key="8">
    <citation type="journal article" date="2009" name="Development">
        <title>Pitx3 potentiates Nurr1 in dopamine neuron terminal differentiation through release of SMRT-mediated repression.</title>
        <authorList>
            <person name="Jacobs F.M."/>
            <person name="van Erp S."/>
            <person name="van der Linden A.J."/>
            <person name="von Oerthel L."/>
            <person name="Burbach J.P."/>
            <person name="Smidt M.P."/>
        </authorList>
    </citation>
    <scope>FUNCTION</scope>
    <scope>INTERACTION WITH NR4A2</scope>
</reference>
<reference key="9">
    <citation type="journal article" date="2009" name="Immunity">
        <title>The phagosomal proteome in interferon-gamma-activated macrophages.</title>
        <authorList>
            <person name="Trost M."/>
            <person name="English L."/>
            <person name="Lemieux S."/>
            <person name="Courcelles M."/>
            <person name="Desjardins M."/>
            <person name="Thibault P."/>
        </authorList>
    </citation>
    <scope>PHOSPHORYLATION [LARGE SCALE ANALYSIS] AT SER-2181</scope>
    <scope>IDENTIFICATION BY MASS SPECTROMETRY [LARGE SCALE ANALYSIS]</scope>
</reference>
<reference key="10">
    <citation type="journal article" date="2010" name="Cell">
        <title>A tissue-specific atlas of mouse protein phosphorylation and expression.</title>
        <authorList>
            <person name="Huttlin E.L."/>
            <person name="Jedrychowski M.P."/>
            <person name="Elias J.E."/>
            <person name="Goswami T."/>
            <person name="Rad R."/>
            <person name="Beausoleil S.A."/>
            <person name="Villen J."/>
            <person name="Haas W."/>
            <person name="Sowa M.E."/>
            <person name="Gygi S.P."/>
        </authorList>
    </citation>
    <scope>PHOSPHORYLATION [LARGE SCALE ANALYSIS] AT SER-149; SER-152; THR-549; SER-550; SER-747; SER-750; THR-1350; SER-1565; SER-1749; SER-2004; SER-2012; SER-2015; SER-2016; SER-2018; THR-2020; SER-2181 AND SER-2215</scope>
    <scope>IDENTIFICATION BY MASS SPECTROMETRY [LARGE SCALE ANALYSIS]</scope>
    <source>
        <tissue>Brain</tissue>
        <tissue>Brown adipose tissue</tissue>
        <tissue>Heart</tissue>
        <tissue>Kidney</tissue>
        <tissue>Liver</tissue>
        <tissue>Lung</tissue>
        <tissue>Pancreas</tissue>
        <tissue>Spleen</tissue>
        <tissue>Testis</tissue>
    </source>
</reference>
<reference key="11">
    <citation type="journal article" date="2013" name="Mol. Cell">
        <title>SIRT5-mediated lysine desuccinylation impacts diverse metabolic pathways.</title>
        <authorList>
            <person name="Park J."/>
            <person name="Chen Y."/>
            <person name="Tishkoff D.X."/>
            <person name="Peng C."/>
            <person name="Tan M."/>
            <person name="Dai L."/>
            <person name="Xie Z."/>
            <person name="Zhang Y."/>
            <person name="Zwaans B.M."/>
            <person name="Skinner M.E."/>
            <person name="Lombard D.B."/>
            <person name="Zhao Y."/>
        </authorList>
    </citation>
    <scope>ACETYLATION [LARGE SCALE ANALYSIS] AT LYS-1983</scope>
    <scope>IDENTIFICATION BY MASS SPECTROMETRY [LARGE SCALE ANALYSIS]</scope>
    <source>
        <tissue>Embryonic fibroblast</tissue>
    </source>
</reference>
<reference key="12">
    <citation type="journal article" date="2013" name="Nat. Neurosci.">
        <title>Rett syndrome mutations abolish the interaction of MeCP2 with the NCoR/SMRT co-repressor.</title>
        <authorList>
            <person name="Lyst M.J."/>
            <person name="Ekiert R."/>
            <person name="Ebert D.H."/>
            <person name="Merusi C."/>
            <person name="Nowak J."/>
            <person name="Selfridge J."/>
            <person name="Guy J."/>
            <person name="Kastan N.R."/>
            <person name="Robinson N.D."/>
            <person name="de Lima Alves F."/>
            <person name="Rappsilber J."/>
            <person name="Greenberg M.E."/>
            <person name="Bird A."/>
        </authorList>
    </citation>
    <scope>INTERACTION WITH MECP2</scope>
</reference>
<reference key="13">
    <citation type="journal article" date="2013" name="Nat. Immunol.">
        <title>Lineage-specific functions of Bcl-6 in immunity and inflammation are mediated by distinct biochemical mechanisms.</title>
        <authorList>
            <person name="Huang C."/>
            <person name="Hatzi K."/>
            <person name="Melnick A."/>
        </authorList>
    </citation>
    <scope>SUBCELLULAR LOCATION</scope>
    <scope>DNA-BINDING</scope>
    <scope>INTERACTION WITH BCL6</scope>
</reference>
<reference key="14">
    <citation type="journal article" date="2014" name="Mol. Cell. Proteomics">
        <title>Immunoaffinity enrichment and mass spectrometry analysis of protein methylation.</title>
        <authorList>
            <person name="Guo A."/>
            <person name="Gu H."/>
            <person name="Zhou J."/>
            <person name="Mulhern D."/>
            <person name="Wang Y."/>
            <person name="Lee K.A."/>
            <person name="Yang V."/>
            <person name="Aguiar M."/>
            <person name="Kornhauser J."/>
            <person name="Jia X."/>
            <person name="Ren J."/>
            <person name="Beausoleil S.A."/>
            <person name="Silva J.C."/>
            <person name="Vemulapalli V."/>
            <person name="Bedford M.T."/>
            <person name="Comb M.J."/>
        </authorList>
    </citation>
    <scope>METHYLATION [LARGE SCALE ANALYSIS] AT ARG-18 AND ARG-1854</scope>
    <scope>IDENTIFICATION BY MASS SPECTROMETRY [LARGE SCALE ANALYSIS]</scope>
    <source>
        <tissue>Embryo</tissue>
    </source>
</reference>
<reference key="15">
    <citation type="journal article" date="2021" name="J. Biol. Chem.">
        <title>The uncharacterized SANT and BTB domain-containing protein SANBR inhibits class switch recombination.</title>
        <authorList>
            <person name="Zheng S."/>
            <person name="Matthews A.J."/>
            <person name="Rahman N."/>
            <person name="Herrick-Reynolds K."/>
            <person name="Sible E."/>
            <person name="Choi J.E."/>
            <person name="Wishnie A."/>
            <person name="Ng Y.K."/>
            <person name="Rhodes D."/>
            <person name="Elledge S.J."/>
            <person name="Vuong B.Q."/>
        </authorList>
    </citation>
    <scope>INTERACTION WITH SANBR</scope>
</reference>
<protein>
    <recommendedName>
        <fullName>Nuclear receptor corepressor 2</fullName>
        <shortName>N-CoR2</shortName>
    </recommendedName>
    <alternativeName>
        <fullName evidence="14">Silencing mediator of retinoic acid and thyroid hormone receptor</fullName>
        <shortName evidence="14">SMRT</shortName>
        <shortName evidence="15">SMRTe</shortName>
    </alternativeName>
    <alternativeName>
        <fullName>T3 receptor-associating factor</fullName>
        <shortName>TRAC</shortName>
    </alternativeName>
    <alternativeName>
        <fullName>Thyroid-, retinoic-acid-receptor-associated corepressor</fullName>
    </alternativeName>
</protein>